<reference key="1">
    <citation type="journal article" date="2003" name="Proc. Natl. Acad. Sci. U.S.A.">
        <title>The complete genome sequence of Mycobacterium bovis.</title>
        <authorList>
            <person name="Garnier T."/>
            <person name="Eiglmeier K."/>
            <person name="Camus J.-C."/>
            <person name="Medina N."/>
            <person name="Mansoor H."/>
            <person name="Pryor M."/>
            <person name="Duthoy S."/>
            <person name="Grondin S."/>
            <person name="Lacroix C."/>
            <person name="Monsempe C."/>
            <person name="Simon S."/>
            <person name="Harris B."/>
            <person name="Atkin R."/>
            <person name="Doggett J."/>
            <person name="Mayes R."/>
            <person name="Keating L."/>
            <person name="Wheeler P.R."/>
            <person name="Parkhill J."/>
            <person name="Barrell B.G."/>
            <person name="Cole S.T."/>
            <person name="Gordon S.V."/>
            <person name="Hewinson R.G."/>
        </authorList>
    </citation>
    <scope>NUCLEOTIDE SEQUENCE [LARGE SCALE GENOMIC DNA]</scope>
    <source>
        <strain>ATCC BAA-935 / AF2122/97</strain>
    </source>
</reference>
<reference key="2">
    <citation type="journal article" date="2017" name="Genome Announc.">
        <title>Updated reference genome sequence and annotation of Mycobacterium bovis AF2122/97.</title>
        <authorList>
            <person name="Malone K.M."/>
            <person name="Farrell D."/>
            <person name="Stuber T.P."/>
            <person name="Schubert O.T."/>
            <person name="Aebersold R."/>
            <person name="Robbe-Austerman S."/>
            <person name="Gordon S.V."/>
        </authorList>
    </citation>
    <scope>NUCLEOTIDE SEQUENCE [LARGE SCALE GENOMIC DNA]</scope>
    <scope>GENOME REANNOTATION</scope>
    <source>
        <strain>ATCC BAA-935 / AF2122/97</strain>
    </source>
</reference>
<organism>
    <name type="scientific">Mycobacterium bovis (strain ATCC BAA-935 / AF2122/97)</name>
    <dbReference type="NCBI Taxonomy" id="233413"/>
    <lineage>
        <taxon>Bacteria</taxon>
        <taxon>Bacillati</taxon>
        <taxon>Actinomycetota</taxon>
        <taxon>Actinomycetes</taxon>
        <taxon>Mycobacteriales</taxon>
        <taxon>Mycobacteriaceae</taxon>
        <taxon>Mycobacterium</taxon>
        <taxon>Mycobacterium tuberculosis complex</taxon>
    </lineage>
</organism>
<accession>Q7TYP6</accession>
<accession>A0A1R3Y1V6</accession>
<accession>X2BKZ0</accession>
<sequence>MTTARPAKARNEGQWALGHREPLNANEELKKAGNPLDVRERIENIYAKQGFDSIDKTDLRGRFRWWGLYTQREQGYDGTWTGDDNIDKLEAKYFMMRVRCDGGALSAAALRTLGQISTEFARDTADISDRQNVQYHWIEVENVPEIWRRLDDVGLQTTEACGDCPRVVLGSPLAGESLDEVLDPTWAIEEIVRRYIGKPDFADLPRKYKTAISGLQDVAHEINDVAFIGVNHPEHGPGLDLWVGGGLSTNPMLAQRVGAWVPLGEVPEVWAAVTSVFRDYGYRRLRAKARLKFLIKDWGIAKFREVLETEYLKRPLIDGPAPEPVKHPIDHVGVQRLKNGLNAVGVAPIAGRVSGTILTAVADLMARAGSDRIRFTPYQKLVILDIPDALLDDLIAGLDALGLQSRPSHWRRNLMACSGIEFCKLSFAETRVRAQHLVPELERRLEDINSQLDVPITVNINGCPNSCARIQIADIGFKGQMIDDGHGGSVEGFQVHLGGHLGLDAGFGRKLRQHKVTSDELGDYIDRVVRNFVKHRSEGERFAQWVIRAEEDDLR</sequence>
<proteinExistence type="inferred from homology"/>
<comment type="function">
    <text evidence="2">Catalyzes the reduction of sulfite to sulfide, a step in the biosynthesis of sulfur-containing amino acids and cofactors.</text>
</comment>
<comment type="catalytic activity">
    <reaction evidence="2">
        <text>hydrogen sulfide + 6 oxidized [2Fe-2S]-[ferredoxin] + 3 H2O = sulfite + 6 reduced [2Fe-2S]-[ferredoxin] + 7 H(+)</text>
        <dbReference type="Rhea" id="RHEA:23132"/>
        <dbReference type="Rhea" id="RHEA-COMP:10000"/>
        <dbReference type="Rhea" id="RHEA-COMP:10001"/>
        <dbReference type="ChEBI" id="CHEBI:15377"/>
        <dbReference type="ChEBI" id="CHEBI:15378"/>
        <dbReference type="ChEBI" id="CHEBI:17359"/>
        <dbReference type="ChEBI" id="CHEBI:29919"/>
        <dbReference type="ChEBI" id="CHEBI:33737"/>
        <dbReference type="ChEBI" id="CHEBI:33738"/>
        <dbReference type="EC" id="1.8.7.1"/>
    </reaction>
</comment>
<comment type="cofactor">
    <cofactor evidence="1">
        <name>siroheme</name>
        <dbReference type="ChEBI" id="CHEBI:60052"/>
    </cofactor>
    <text evidence="1">Binds 1 siroheme per subunit.</text>
</comment>
<comment type="cofactor">
    <cofactor evidence="1">
        <name>[4Fe-4S] cluster</name>
        <dbReference type="ChEBI" id="CHEBI:49883"/>
    </cofactor>
    <text evidence="1">Binds 1 [4Fe-4S] cluster per subunit.</text>
</comment>
<comment type="subunit">
    <text evidence="1">Monomer.</text>
</comment>
<comment type="similarity">
    <text evidence="4">Belongs to the nitrite and sulfite reductase 4Fe-4S domain family.</text>
</comment>
<comment type="sequence caution" evidence="4">
    <conflict type="erroneous initiation">
        <sequence resource="EMBL-CDS" id="SIU01025"/>
    </conflict>
    <text>Extended N-terminus.</text>
</comment>
<name>SIR_MYCBO</name>
<protein>
    <recommendedName>
        <fullName>Sulfite reductase [ferredoxin]</fullName>
        <ecNumber>1.8.7.1</ecNumber>
    </recommendedName>
</protein>
<dbReference type="EC" id="1.8.7.1"/>
<dbReference type="EMBL" id="LT708304">
    <property type="protein sequence ID" value="SIU01025.1"/>
    <property type="status" value="ALT_INIT"/>
    <property type="molecule type" value="Genomic_DNA"/>
</dbReference>
<dbReference type="RefSeq" id="NP_856061.1">
    <property type="nucleotide sequence ID" value="NC_002945.3"/>
</dbReference>
<dbReference type="SMR" id="Q7TYP6"/>
<dbReference type="KEGG" id="mbo:BQ2027_MB2412"/>
<dbReference type="PATRIC" id="fig|233413.5.peg.2651"/>
<dbReference type="Proteomes" id="UP000001419">
    <property type="component" value="Chromosome"/>
</dbReference>
<dbReference type="GO" id="GO:0051539">
    <property type="term" value="F:4 iron, 4 sulfur cluster binding"/>
    <property type="evidence" value="ECO:0007669"/>
    <property type="project" value="UniProtKB-KW"/>
</dbReference>
<dbReference type="GO" id="GO:0020037">
    <property type="term" value="F:heme binding"/>
    <property type="evidence" value="ECO:0007669"/>
    <property type="project" value="InterPro"/>
</dbReference>
<dbReference type="GO" id="GO:0046872">
    <property type="term" value="F:metal ion binding"/>
    <property type="evidence" value="ECO:0007669"/>
    <property type="project" value="UniProtKB-KW"/>
</dbReference>
<dbReference type="GO" id="GO:0050311">
    <property type="term" value="F:sulfite reductase (ferredoxin) activity"/>
    <property type="evidence" value="ECO:0007669"/>
    <property type="project" value="UniProtKB-EC"/>
</dbReference>
<dbReference type="FunFam" id="3.30.413.10:FF:000009">
    <property type="entry name" value="Sulfite reductase [ferredoxin]"/>
    <property type="match status" value="1"/>
</dbReference>
<dbReference type="FunFam" id="3.30.413.10:FF:000013">
    <property type="entry name" value="Sulfite reductase [ferredoxin]"/>
    <property type="match status" value="1"/>
</dbReference>
<dbReference type="Gene3D" id="3.90.480.20">
    <property type="match status" value="1"/>
</dbReference>
<dbReference type="Gene3D" id="3.30.413.10">
    <property type="entry name" value="Sulfite Reductase Hemoprotein, domain 1"/>
    <property type="match status" value="2"/>
</dbReference>
<dbReference type="InterPro" id="IPR051329">
    <property type="entry name" value="NIR_SIR_4Fe-4S"/>
</dbReference>
<dbReference type="InterPro" id="IPR005117">
    <property type="entry name" value="NiRdtase/SiRdtase_haem-b_fer"/>
</dbReference>
<dbReference type="InterPro" id="IPR036136">
    <property type="entry name" value="Nit/Sulf_reduc_fer-like_dom_sf"/>
</dbReference>
<dbReference type="InterPro" id="IPR006067">
    <property type="entry name" value="NO2/SO3_Rdtase_4Fe4S_dom"/>
</dbReference>
<dbReference type="InterPro" id="IPR045854">
    <property type="entry name" value="NO2/SO3_Rdtase_4Fe4S_sf"/>
</dbReference>
<dbReference type="InterPro" id="IPR006066">
    <property type="entry name" value="NO2/SO3_Rdtase_FeS/sirohaem_BS"/>
</dbReference>
<dbReference type="PANTHER" id="PTHR32439">
    <property type="entry name" value="FERREDOXIN--NITRITE REDUCTASE, CHLOROPLASTIC"/>
    <property type="match status" value="1"/>
</dbReference>
<dbReference type="PANTHER" id="PTHR32439:SF0">
    <property type="entry name" value="FERREDOXIN--NITRITE REDUCTASE, CHLOROPLASTIC"/>
    <property type="match status" value="1"/>
</dbReference>
<dbReference type="Pfam" id="PF01077">
    <property type="entry name" value="NIR_SIR"/>
    <property type="match status" value="2"/>
</dbReference>
<dbReference type="Pfam" id="PF03460">
    <property type="entry name" value="NIR_SIR_ferr"/>
    <property type="match status" value="2"/>
</dbReference>
<dbReference type="PRINTS" id="PR00397">
    <property type="entry name" value="SIROHAEM"/>
</dbReference>
<dbReference type="SUPFAM" id="SSF56014">
    <property type="entry name" value="Nitrite and sulphite reductase 4Fe-4S domain-like"/>
    <property type="match status" value="2"/>
</dbReference>
<dbReference type="SUPFAM" id="SSF55124">
    <property type="entry name" value="Nitrite/Sulfite reductase N-terminal domain-like"/>
    <property type="match status" value="2"/>
</dbReference>
<dbReference type="PROSITE" id="PS00365">
    <property type="entry name" value="NIR_SIR"/>
    <property type="match status" value="1"/>
</dbReference>
<keyword id="KW-0004">4Fe-4S</keyword>
<keyword id="KW-0349">Heme</keyword>
<keyword id="KW-0408">Iron</keyword>
<keyword id="KW-0411">Iron-sulfur</keyword>
<keyword id="KW-0479">Metal-binding</keyword>
<keyword id="KW-0560">Oxidoreductase</keyword>
<keyword id="KW-1185">Reference proteome</keyword>
<keyword id="KW-0883">Thioether bond</keyword>
<evidence type="ECO:0000250" key="1"/>
<evidence type="ECO:0000250" key="2">
    <source>
        <dbReference type="UniProtKB" id="P9WJ03"/>
    </source>
</evidence>
<evidence type="ECO:0000256" key="3">
    <source>
        <dbReference type="SAM" id="MobiDB-lite"/>
    </source>
</evidence>
<evidence type="ECO:0000305" key="4"/>
<gene>
    <name type="primary">sir</name>
    <name type="synonym">nirA</name>
    <name type="ordered locus">BQ2027_MB2412</name>
</gene>
<feature type="chain" id="PRO_0000199949" description="Sulfite reductase [ferredoxin]">
    <location>
        <begin position="1"/>
        <end position="555"/>
    </location>
</feature>
<feature type="region of interest" description="Disordered" evidence="3">
    <location>
        <begin position="1"/>
        <end position="22"/>
    </location>
</feature>
<feature type="binding site" evidence="1">
    <location>
        <position position="417"/>
    </location>
    <ligand>
        <name>[4Fe-4S] cluster</name>
        <dbReference type="ChEBI" id="CHEBI:49883"/>
    </ligand>
</feature>
<feature type="binding site" evidence="1">
    <location>
        <position position="423"/>
    </location>
    <ligand>
        <name>[4Fe-4S] cluster</name>
        <dbReference type="ChEBI" id="CHEBI:49883"/>
    </ligand>
</feature>
<feature type="binding site" evidence="1">
    <location>
        <position position="463"/>
    </location>
    <ligand>
        <name>[4Fe-4S] cluster</name>
        <dbReference type="ChEBI" id="CHEBI:49883"/>
    </ligand>
</feature>
<feature type="binding site" evidence="1">
    <location>
        <position position="467"/>
    </location>
    <ligand>
        <name>[4Fe-4S] cluster</name>
        <dbReference type="ChEBI" id="CHEBI:49883"/>
    </ligand>
</feature>
<feature type="binding site" description="axial binding residue" evidence="1">
    <location>
        <position position="467"/>
    </location>
    <ligand>
        <name>siroheme</name>
        <dbReference type="ChEBI" id="CHEBI:60052"/>
    </ligand>
    <ligandPart>
        <name>Fe</name>
        <dbReference type="ChEBI" id="CHEBI:18248"/>
    </ligandPart>
</feature>
<feature type="cross-link" description="3'-(S-cysteinyl)-tyrosine (Tyr-Cys)" evidence="1">
    <location>
        <begin position="69"/>
        <end position="161"/>
    </location>
</feature>